<proteinExistence type="inferred from homology"/>
<reference key="1">
    <citation type="journal article" date="2003" name="Proc. Natl. Acad. Sci. U.S.A.">
        <title>The complete genome sequence of Mycobacterium bovis.</title>
        <authorList>
            <person name="Garnier T."/>
            <person name="Eiglmeier K."/>
            <person name="Camus J.-C."/>
            <person name="Medina N."/>
            <person name="Mansoor H."/>
            <person name="Pryor M."/>
            <person name="Duthoy S."/>
            <person name="Grondin S."/>
            <person name="Lacroix C."/>
            <person name="Monsempe C."/>
            <person name="Simon S."/>
            <person name="Harris B."/>
            <person name="Atkin R."/>
            <person name="Doggett J."/>
            <person name="Mayes R."/>
            <person name="Keating L."/>
            <person name="Wheeler P.R."/>
            <person name="Parkhill J."/>
            <person name="Barrell B.G."/>
            <person name="Cole S.T."/>
            <person name="Gordon S.V."/>
            <person name="Hewinson R.G."/>
        </authorList>
    </citation>
    <scope>NUCLEOTIDE SEQUENCE [LARGE SCALE GENOMIC DNA]</scope>
    <source>
        <strain>ATCC BAA-935 / AF2122/97</strain>
    </source>
</reference>
<reference key="2">
    <citation type="journal article" date="2017" name="Genome Announc.">
        <title>Updated reference genome sequence and annotation of Mycobacterium bovis AF2122/97.</title>
        <authorList>
            <person name="Malone K.M."/>
            <person name="Farrell D."/>
            <person name="Stuber T.P."/>
            <person name="Schubert O.T."/>
            <person name="Aebersold R."/>
            <person name="Robbe-Austerman S."/>
            <person name="Gordon S.V."/>
        </authorList>
    </citation>
    <scope>NUCLEOTIDE SEQUENCE [LARGE SCALE GENOMIC DNA]</scope>
    <scope>GENOME REANNOTATION</scope>
    <source>
        <strain>ATCC BAA-935 / AF2122/97</strain>
    </source>
</reference>
<protein>
    <recommendedName>
        <fullName>Uncharacterized tRNA/rRNA methyltransferase Mb3610c</fullName>
        <ecNumber>2.1.1.-</ecNumber>
    </recommendedName>
</protein>
<sequence>MPGNSRRRGAVRKSGTKKGAGVGSGGQRRRGLEGRGPTPPAHLRPHHPAAKRARAQPRRPVKRADETETVLGRNPVLECLRAGVPATALYVALGTEADERLTECVARAADSGIAIVELLRADLDRMTANHLHQGIALQVPPYNYAHPDDLLAAALDQPPALLVALDNLSDPRNLGAIMRSVAAFGGHGVLIPQRRSASVTAVAWRTSAGAAARIPVARATNLTRTLKGWADRGVRVIGLDAGGGTALDDVDGTDSLVVVVGSEGKGLSRLVRQNCDEVVSIPMAAQAESLNASVAAGVVLAAIARQRRRPREPREQTQNRMI</sequence>
<gene>
    <name type="ordered locus">BQ2027_MB3610C</name>
</gene>
<name>Y3610_MYCBO</name>
<keyword id="KW-0489">Methyltransferase</keyword>
<keyword id="KW-1185">Reference proteome</keyword>
<keyword id="KW-0949">S-adenosyl-L-methionine</keyword>
<keyword id="KW-0808">Transferase</keyword>
<feature type="chain" id="PRO_0000379570" description="Uncharacterized tRNA/rRNA methyltransferase Mb3610c">
    <location>
        <begin position="1"/>
        <end position="322"/>
    </location>
</feature>
<feature type="region of interest" description="Disordered" evidence="2">
    <location>
        <begin position="1"/>
        <end position="69"/>
    </location>
</feature>
<feature type="compositionally biased region" description="Basic residues" evidence="2">
    <location>
        <begin position="1"/>
        <end position="16"/>
    </location>
</feature>
<feature type="compositionally biased region" description="Basic residues" evidence="2">
    <location>
        <begin position="43"/>
        <end position="61"/>
    </location>
</feature>
<feature type="binding site" evidence="1">
    <location>
        <position position="261"/>
    </location>
    <ligand>
        <name>S-adenosyl-L-methionine</name>
        <dbReference type="ChEBI" id="CHEBI:59789"/>
    </ligand>
</feature>
<feature type="binding site" evidence="1">
    <location>
        <position position="281"/>
    </location>
    <ligand>
        <name>S-adenosyl-L-methionine</name>
        <dbReference type="ChEBI" id="CHEBI:59789"/>
    </ligand>
</feature>
<feature type="binding site" evidence="1">
    <location>
        <position position="290"/>
    </location>
    <ligand>
        <name>S-adenosyl-L-methionine</name>
        <dbReference type="ChEBI" id="CHEBI:59789"/>
    </ligand>
</feature>
<organism>
    <name type="scientific">Mycobacterium bovis (strain ATCC BAA-935 / AF2122/97)</name>
    <dbReference type="NCBI Taxonomy" id="233413"/>
    <lineage>
        <taxon>Bacteria</taxon>
        <taxon>Bacillati</taxon>
        <taxon>Actinomycetota</taxon>
        <taxon>Actinomycetes</taxon>
        <taxon>Mycobacteriales</taxon>
        <taxon>Mycobacteriaceae</taxon>
        <taxon>Mycobacterium</taxon>
        <taxon>Mycobacterium tuberculosis complex</taxon>
    </lineage>
</organism>
<comment type="similarity">
    <text evidence="3">Belongs to the class IV-like SAM-binding methyltransferase superfamily. RNA methyltransferase TrmH family.</text>
</comment>
<evidence type="ECO:0000250" key="1"/>
<evidence type="ECO:0000256" key="2">
    <source>
        <dbReference type="SAM" id="MobiDB-lite"/>
    </source>
</evidence>
<evidence type="ECO:0000305" key="3"/>
<dbReference type="EC" id="2.1.1.-"/>
<dbReference type="EMBL" id="LT708304">
    <property type="protein sequence ID" value="SIU02237.1"/>
    <property type="molecule type" value="Genomic_DNA"/>
</dbReference>
<dbReference type="RefSeq" id="WP_038438779.1">
    <property type="nucleotide sequence ID" value="NC_002945.4"/>
</dbReference>
<dbReference type="SMR" id="Q7TW55"/>
<dbReference type="KEGG" id="mbo:BQ2027_MB3610C"/>
<dbReference type="PATRIC" id="fig|233413.5.peg.3956"/>
<dbReference type="Proteomes" id="UP000001419">
    <property type="component" value="Chromosome"/>
</dbReference>
<dbReference type="GO" id="GO:0005829">
    <property type="term" value="C:cytosol"/>
    <property type="evidence" value="ECO:0007669"/>
    <property type="project" value="TreeGrafter"/>
</dbReference>
<dbReference type="GO" id="GO:0003723">
    <property type="term" value="F:RNA binding"/>
    <property type="evidence" value="ECO:0007669"/>
    <property type="project" value="InterPro"/>
</dbReference>
<dbReference type="GO" id="GO:0008173">
    <property type="term" value="F:RNA methyltransferase activity"/>
    <property type="evidence" value="ECO:0007669"/>
    <property type="project" value="InterPro"/>
</dbReference>
<dbReference type="GO" id="GO:0032259">
    <property type="term" value="P:methylation"/>
    <property type="evidence" value="ECO:0007669"/>
    <property type="project" value="UniProtKB-KW"/>
</dbReference>
<dbReference type="GO" id="GO:0006396">
    <property type="term" value="P:RNA processing"/>
    <property type="evidence" value="ECO:0007669"/>
    <property type="project" value="InterPro"/>
</dbReference>
<dbReference type="CDD" id="cd18103">
    <property type="entry name" value="SpoU-like_RlmB"/>
    <property type="match status" value="1"/>
</dbReference>
<dbReference type="FunFam" id="3.30.1330.30:FF:000024">
    <property type="entry name" value="Putative tRNA/rRNA methyltransferase"/>
    <property type="match status" value="1"/>
</dbReference>
<dbReference type="FunFam" id="3.40.1280.10:FF:000015">
    <property type="entry name" value="Putative tRNA/rRNA methyltransferase"/>
    <property type="match status" value="1"/>
</dbReference>
<dbReference type="Gene3D" id="3.30.1330.30">
    <property type="match status" value="1"/>
</dbReference>
<dbReference type="Gene3D" id="3.40.1280.10">
    <property type="match status" value="1"/>
</dbReference>
<dbReference type="InterPro" id="IPR029028">
    <property type="entry name" value="Alpha/beta_knot_MTases"/>
</dbReference>
<dbReference type="InterPro" id="IPR029064">
    <property type="entry name" value="Ribosomal_eL30-like_sf"/>
</dbReference>
<dbReference type="InterPro" id="IPR004441">
    <property type="entry name" value="rRNA_MeTrfase_TrmH"/>
</dbReference>
<dbReference type="InterPro" id="IPR001537">
    <property type="entry name" value="SpoU_MeTrfase"/>
</dbReference>
<dbReference type="InterPro" id="IPR013123">
    <property type="entry name" value="SpoU_subst-bd"/>
</dbReference>
<dbReference type="InterPro" id="IPR029026">
    <property type="entry name" value="tRNA_m1G_MTases_N"/>
</dbReference>
<dbReference type="NCBIfam" id="TIGR00186">
    <property type="entry name" value="rRNA_methyl_3"/>
    <property type="match status" value="1"/>
</dbReference>
<dbReference type="PANTHER" id="PTHR46429">
    <property type="entry name" value="23S RRNA (GUANOSINE-2'-O-)-METHYLTRANSFERASE RLMB"/>
    <property type="match status" value="1"/>
</dbReference>
<dbReference type="PANTHER" id="PTHR46429:SF1">
    <property type="entry name" value="23S RRNA (GUANOSINE-2'-O-)-METHYLTRANSFERASE RLMB"/>
    <property type="match status" value="1"/>
</dbReference>
<dbReference type="Pfam" id="PF00588">
    <property type="entry name" value="SpoU_methylase"/>
    <property type="match status" value="1"/>
</dbReference>
<dbReference type="Pfam" id="PF08032">
    <property type="entry name" value="SpoU_sub_bind"/>
    <property type="match status" value="1"/>
</dbReference>
<dbReference type="SMART" id="SM00967">
    <property type="entry name" value="SpoU_sub_bind"/>
    <property type="match status" value="1"/>
</dbReference>
<dbReference type="SUPFAM" id="SSF75217">
    <property type="entry name" value="alpha/beta knot"/>
    <property type="match status" value="1"/>
</dbReference>
<dbReference type="SUPFAM" id="SSF55315">
    <property type="entry name" value="L30e-like"/>
    <property type="match status" value="1"/>
</dbReference>
<accession>Q7TW55</accession>
<accession>A0A1R3Y4J4</accession>
<accession>X2BPC3</accession>